<evidence type="ECO:0000250" key="1">
    <source>
        <dbReference type="UniProtKB" id="Q9JHI9"/>
    </source>
</evidence>
<evidence type="ECO:0000255" key="2"/>
<evidence type="ECO:0000269" key="3">
    <source>
    </source>
</evidence>
<evidence type="ECO:0000269" key="4">
    <source>
    </source>
</evidence>
<evidence type="ECO:0000269" key="5">
    <source>
    </source>
</evidence>
<evidence type="ECO:0000269" key="6">
    <source>
    </source>
</evidence>
<evidence type="ECO:0000269" key="7">
    <source>
    </source>
</evidence>
<evidence type="ECO:0000269" key="8">
    <source>
    </source>
</evidence>
<evidence type="ECO:0000269" key="9">
    <source>
    </source>
</evidence>
<evidence type="ECO:0000269" key="10">
    <source>
    </source>
</evidence>
<evidence type="ECO:0000269" key="11">
    <source>
    </source>
</evidence>
<evidence type="ECO:0000269" key="12">
    <source>
    </source>
</evidence>
<evidence type="ECO:0000269" key="13">
    <source>
    </source>
</evidence>
<evidence type="ECO:0000269" key="14">
    <source>
    </source>
</evidence>
<evidence type="ECO:0000269" key="15">
    <source>
    </source>
</evidence>
<evidence type="ECO:0000269" key="16">
    <source>
    </source>
</evidence>
<evidence type="ECO:0000269" key="17">
    <source>
    </source>
</evidence>
<evidence type="ECO:0000269" key="18">
    <source>
    </source>
</evidence>
<evidence type="ECO:0000269" key="19">
    <source>
    </source>
</evidence>
<evidence type="ECO:0000269" key="20">
    <source>
    </source>
</evidence>
<evidence type="ECO:0000269" key="21">
    <source>
    </source>
</evidence>
<evidence type="ECO:0000269" key="22">
    <source>
    </source>
</evidence>
<evidence type="ECO:0000269" key="23">
    <source>
    </source>
</evidence>
<evidence type="ECO:0000269" key="24">
    <source>
    </source>
</evidence>
<evidence type="ECO:0000269" key="25">
    <source>
    </source>
</evidence>
<evidence type="ECO:0000269" key="26">
    <source>
    </source>
</evidence>
<evidence type="ECO:0000269" key="27">
    <source>
    </source>
</evidence>
<evidence type="ECO:0000269" key="28">
    <source>
    </source>
</evidence>
<evidence type="ECO:0000269" key="29">
    <source>
    </source>
</evidence>
<evidence type="ECO:0000269" key="30">
    <source>
    </source>
</evidence>
<evidence type="ECO:0000303" key="31">
    <source>
    </source>
</evidence>
<evidence type="ECO:0000305" key="32"/>
<evidence type="ECO:0000305" key="33">
    <source>
    </source>
</evidence>
<evidence type="ECO:0000305" key="34">
    <source>
    </source>
</evidence>
<evidence type="ECO:0000312" key="35">
    <source>
        <dbReference type="HGNC" id="HGNC:10909"/>
    </source>
</evidence>
<evidence type="ECO:0007744" key="36">
    <source>
        <dbReference type="PDB" id="6W4S"/>
    </source>
</evidence>
<evidence type="ECO:0007744" key="37">
    <source>
        <dbReference type="PDB" id="6WBV"/>
    </source>
</evidence>
<evidence type="ECO:0007829" key="38">
    <source>
        <dbReference type="PDB" id="6WBV"/>
    </source>
</evidence>
<evidence type="ECO:0007829" key="39">
    <source>
        <dbReference type="PDB" id="8DL6"/>
    </source>
</evidence>
<evidence type="ECO:0007829" key="40">
    <source>
        <dbReference type="PDB" id="8DL7"/>
    </source>
</evidence>
<evidence type="ECO:0007829" key="41">
    <source>
        <dbReference type="PDB" id="8DL8"/>
    </source>
</evidence>
<comment type="function">
    <text evidence="1 19 21 22 24 25 26 28 29">Transports Fe(2+) from the inside of a cell to the outside of the cell, playing a key role for maintaining systemic iron homeostasis (PubMed:15692071, PubMed:22178646, PubMed:22682227, PubMed:24304836, PubMed:29237594, PubMed:29599243, PubMed:30247984). Transports iron from intestinal, splenic, hepatic cells, macrophages and erythrocytes into the blood to provide iron to other tissues (By similarity). Controls therefore dietary iron uptake, iron recycling by macrophages and erythrocytes, and release of iron stores in hepatocytes (By similarity). When iron is in excess in serum, circulating HAMP/hepcidin levels increase resulting in a degradation of SLC40A1, thus limiting the iron efflux to plasma (PubMed:22682227, PubMed:29237594, PubMed:32814342).</text>
</comment>
<comment type="catalytic activity">
    <reaction evidence="19 21 22 24 25 26 28">
        <text>Fe(2+)(in) = Fe(2+)(out)</text>
        <dbReference type="Rhea" id="RHEA:28486"/>
        <dbReference type="ChEBI" id="CHEBI:29033"/>
    </reaction>
</comment>
<comment type="subunit">
    <text evidence="22 23 25 29 30">Identified in a complex with STOM (PubMed:23219802). Interacts with HAMP; affinity of the peptide hormone HAMP for SLC40A1 increases by 80-fold in the presence of iron and the interaction promotes SLC40A1 ubiquitination and degradation (PubMed:22682227, PubMed:29237594, PubMed:32814342). Part of a complex composed of SLC40A1/ferroportin, TF/transferrin and HEPH/hephaestin that transfers iron from cells to transferrin (PubMed:37277838).</text>
</comment>
<comment type="interaction">
    <interactant intactId="EBI-725153">
        <id>Q9NP59</id>
    </interactant>
    <interactant intactId="EBI-77613">
        <id>P05067</id>
        <label>APP</label>
    </interactant>
    <organismsDiffer>false</organismsDiffer>
    <experiments>5</experiments>
</comment>
<comment type="subcellular location">
    <subcellularLocation>
        <location evidence="4 19 23 24 25 28">Cell membrane</location>
        <topology evidence="29">Multi-pass membrane protein</topology>
    </subcellularLocation>
    <subcellularLocation>
        <location evidence="27">Basolateral cell membrane</location>
        <topology evidence="29">Multi-pass membrane protein</topology>
    </subcellularLocation>
    <text evidence="27">Localized to the basolateral membrane of hepatocytoma WIF-B cells.</text>
</comment>
<comment type="tissue specificity">
    <text evidence="3 23 26">Detected in erythrocytes (at protein level) (PubMed:23219802). Expressed in placenta, intestine, muscle and spleen (PubMed:10747949). Highly expressed in mature red blood (PubMed:29599243).</text>
</comment>
<comment type="PTM">
    <text evidence="1 22 30">Polyubiquitinated by RNF217; leading to proteasomal degradation (By similarity). Under conditions of high systemic iron levels, both the hormone peptide hepcidin/HAMP and holo(iron bound)-transferrin/TF induce the ubiquitination, internalization and proteasomal degradation of SLC40A1 to control iron release from cells (PubMed:22682227, PubMed:37277838).</text>
</comment>
<comment type="disease" evidence="3 5 6 7 8 9 10 11 12 13 14 16 17 18 19 20 25 28">
    <disease id="DI-01701">
        <name>Hemochromatosis 4</name>
        <acronym>HFE4</acronym>
        <description>A disorder of iron metabolism characterized by iron overload. Excess iron is deposited in a variety of organs leading to their failure, and resulting in serious illnesses including cirrhosis, hepatomas, diabetes, cardiomyopathy, arthritis, and hypogonadotropic hypogonadism. Severe effects of the disease usually do not appear until after decades of progressive iron loading.</description>
        <dbReference type="MIM" id="606069"/>
    </disease>
    <text>The disease is caused by variants affecting the gene represented in this entry.</text>
</comment>
<comment type="similarity">
    <text evidence="32">Belongs to the ferroportin (FP) (TC 2.A.100) family. SLC40A subfamily.</text>
</comment>
<comment type="caution">
    <text evidence="1 21 24 27 28 32">Manganese Mn(2+) transport by SLC40A1 remains controversial. Some in vitro studies have suggested that SLC40A1 transports minimal amounts of Mn(2+) (PubMed:22178646, PubMed:30247984). Other groups have suggested that it does not (PubMed:24304836, PubMed:29792530). The affinity of SLC40A1 for Mn(2+) is extremely low compared with iron, implying that any SLC40A1-mediated Mn(2+) transport in vivo would likely be trivial (PubMed:24304836). A recent study examined the role of SLC40A1 in Mn(2+) homeostasis by using Tmprss6-O mice, which express high levels of hepcidin/HAMP and therefore have very low SLC40A1 levels in their tissues. These mice show frank iron deficiency and reduced iron levels in most tissues, but manganese levels are largely unaffected (By similarity). These studies suggest that manganese is propably not the physiological substrate of SLC40A1.</text>
</comment>
<proteinExistence type="evidence at protein level"/>
<name>S40A1_HUMAN</name>
<reference key="1">
    <citation type="journal article" date="2000" name="J. Biol. Chem.">
        <title>A novel mammalian iron-regulated protein involved in intracellular iron metabolism.</title>
        <authorList>
            <person name="Abboud S."/>
            <person name="Haile D.J."/>
        </authorList>
    </citation>
    <scope>NUCLEOTIDE SEQUENCE [MRNA]</scope>
    <scope>TISSUE SPECIFICITY</scope>
    <scope>VARIANT HFE4 ASP-77</scope>
</reference>
<reference key="2">
    <citation type="journal article" date="2000" name="Mol. Cell">
        <title>A novel duodenal iron-regulated transporter, IREG1, implicated in the basolateral transfer of iron to the circulation.</title>
        <authorList>
            <person name="McKie A.T."/>
            <person name="Marciani P."/>
            <person name="Rolfs A."/>
            <person name="Brennan K."/>
            <person name="Wehr K."/>
            <person name="Barrow D."/>
            <person name="Miret S."/>
            <person name="Bomford A."/>
            <person name="Peters T.J."/>
            <person name="Farzaneh F."/>
            <person name="Hediger M.A."/>
            <person name="Hentze M.W."/>
            <person name="Simpson R.J."/>
        </authorList>
    </citation>
    <scope>NUCLEOTIDE SEQUENCE [MRNA]</scope>
    <scope>SUBCELLULAR LOCATION</scope>
</reference>
<reference key="3">
    <citation type="journal article" date="2000" name="Nature">
        <title>Positional cloning of zebrafish ferroportin1 identifies a conserved vertebrate iron exporter.</title>
        <authorList>
            <person name="Donovan A."/>
            <person name="Brownlie A."/>
            <person name="Zhou Y."/>
            <person name="Shepard J."/>
            <person name="Pratt S.J."/>
            <person name="Moynihan J."/>
            <person name="Paw B.H."/>
            <person name="Drejer A."/>
            <person name="Barut B."/>
            <person name="Zapata A."/>
            <person name="Law T.C."/>
            <person name="Brugnara C."/>
            <person name="Lux S.E. IV"/>
            <person name="Pinkus G.S."/>
            <person name="Pinkus J.L."/>
            <person name="Kingsley P.D."/>
            <person name="Palis J."/>
            <person name="Fleming M.D."/>
            <person name="Andrews N.C."/>
            <person name="Zon L.I."/>
        </authorList>
    </citation>
    <scope>NUCLEOTIDE SEQUENCE [MRNA]</scope>
    <scope>TISSUE SPECIFICITY</scope>
    <scope>SUBCELLULAR LOCATION</scope>
    <source>
        <tissue>Placenta</tissue>
    </source>
</reference>
<reference key="4">
    <citation type="journal article" date="2001" name="Genome Res.">
        <title>Towards a catalog of human genes and proteins: sequencing and analysis of 500 novel complete protein coding human cDNAs.</title>
        <authorList>
            <person name="Wiemann S."/>
            <person name="Weil B."/>
            <person name="Wellenreuther R."/>
            <person name="Gassenhuber J."/>
            <person name="Glassl S."/>
            <person name="Ansorge W."/>
            <person name="Boecher M."/>
            <person name="Bloecker H."/>
            <person name="Bauersachs S."/>
            <person name="Blum H."/>
            <person name="Lauber J."/>
            <person name="Duesterhoeft A."/>
            <person name="Beyer A."/>
            <person name="Koehrer K."/>
            <person name="Strack N."/>
            <person name="Mewes H.-W."/>
            <person name="Ottenwaelder B."/>
            <person name="Obermaier B."/>
            <person name="Tampe J."/>
            <person name="Heubner D."/>
            <person name="Wambutt R."/>
            <person name="Korn B."/>
            <person name="Klein M."/>
            <person name="Poustka A."/>
        </authorList>
    </citation>
    <scope>NUCLEOTIDE SEQUENCE [LARGE SCALE MRNA]</scope>
    <source>
        <tissue>Uterus</tissue>
    </source>
</reference>
<reference key="5">
    <citation type="journal article" date="2004" name="Nat. Genet.">
        <title>Complete sequencing and characterization of 21,243 full-length human cDNAs.</title>
        <authorList>
            <person name="Ota T."/>
            <person name="Suzuki Y."/>
            <person name="Nishikawa T."/>
            <person name="Otsuki T."/>
            <person name="Sugiyama T."/>
            <person name="Irie R."/>
            <person name="Wakamatsu A."/>
            <person name="Hayashi K."/>
            <person name="Sato H."/>
            <person name="Nagai K."/>
            <person name="Kimura K."/>
            <person name="Makita H."/>
            <person name="Sekine M."/>
            <person name="Obayashi M."/>
            <person name="Nishi T."/>
            <person name="Shibahara T."/>
            <person name="Tanaka T."/>
            <person name="Ishii S."/>
            <person name="Yamamoto J."/>
            <person name="Saito K."/>
            <person name="Kawai Y."/>
            <person name="Isono Y."/>
            <person name="Nakamura Y."/>
            <person name="Nagahari K."/>
            <person name="Murakami K."/>
            <person name="Yasuda T."/>
            <person name="Iwayanagi T."/>
            <person name="Wagatsuma M."/>
            <person name="Shiratori A."/>
            <person name="Sudo H."/>
            <person name="Hosoiri T."/>
            <person name="Kaku Y."/>
            <person name="Kodaira H."/>
            <person name="Kondo H."/>
            <person name="Sugawara M."/>
            <person name="Takahashi M."/>
            <person name="Kanda K."/>
            <person name="Yokoi T."/>
            <person name="Furuya T."/>
            <person name="Kikkawa E."/>
            <person name="Omura Y."/>
            <person name="Abe K."/>
            <person name="Kamihara K."/>
            <person name="Katsuta N."/>
            <person name="Sato K."/>
            <person name="Tanikawa M."/>
            <person name="Yamazaki M."/>
            <person name="Ninomiya K."/>
            <person name="Ishibashi T."/>
            <person name="Yamashita H."/>
            <person name="Murakawa K."/>
            <person name="Fujimori K."/>
            <person name="Tanai H."/>
            <person name="Kimata M."/>
            <person name="Watanabe M."/>
            <person name="Hiraoka S."/>
            <person name="Chiba Y."/>
            <person name="Ishida S."/>
            <person name="Ono Y."/>
            <person name="Takiguchi S."/>
            <person name="Watanabe S."/>
            <person name="Yosida M."/>
            <person name="Hotuta T."/>
            <person name="Kusano J."/>
            <person name="Kanehori K."/>
            <person name="Takahashi-Fujii A."/>
            <person name="Hara H."/>
            <person name="Tanase T.-O."/>
            <person name="Nomura Y."/>
            <person name="Togiya S."/>
            <person name="Komai F."/>
            <person name="Hara R."/>
            <person name="Takeuchi K."/>
            <person name="Arita M."/>
            <person name="Imose N."/>
            <person name="Musashino K."/>
            <person name="Yuuki H."/>
            <person name="Oshima A."/>
            <person name="Sasaki N."/>
            <person name="Aotsuka S."/>
            <person name="Yoshikawa Y."/>
            <person name="Matsunawa H."/>
            <person name="Ichihara T."/>
            <person name="Shiohata N."/>
            <person name="Sano S."/>
            <person name="Moriya S."/>
            <person name="Momiyama H."/>
            <person name="Satoh N."/>
            <person name="Takami S."/>
            <person name="Terashima Y."/>
            <person name="Suzuki O."/>
            <person name="Nakagawa S."/>
            <person name="Senoh A."/>
            <person name="Mizoguchi H."/>
            <person name="Goto Y."/>
            <person name="Shimizu F."/>
            <person name="Wakebe H."/>
            <person name="Hishigaki H."/>
            <person name="Watanabe T."/>
            <person name="Sugiyama A."/>
            <person name="Takemoto M."/>
            <person name="Kawakami B."/>
            <person name="Yamazaki M."/>
            <person name="Watanabe K."/>
            <person name="Kumagai A."/>
            <person name="Itakura S."/>
            <person name="Fukuzumi Y."/>
            <person name="Fujimori Y."/>
            <person name="Komiyama M."/>
            <person name="Tashiro H."/>
            <person name="Tanigami A."/>
            <person name="Fujiwara T."/>
            <person name="Ono T."/>
            <person name="Yamada K."/>
            <person name="Fujii Y."/>
            <person name="Ozaki K."/>
            <person name="Hirao M."/>
            <person name="Ohmori Y."/>
            <person name="Kawabata A."/>
            <person name="Hikiji T."/>
            <person name="Kobatake N."/>
            <person name="Inagaki H."/>
            <person name="Ikema Y."/>
            <person name="Okamoto S."/>
            <person name="Okitani R."/>
            <person name="Kawakami T."/>
            <person name="Noguchi S."/>
            <person name="Itoh T."/>
            <person name="Shigeta K."/>
            <person name="Senba T."/>
            <person name="Matsumura K."/>
            <person name="Nakajima Y."/>
            <person name="Mizuno T."/>
            <person name="Morinaga M."/>
            <person name="Sasaki M."/>
            <person name="Togashi T."/>
            <person name="Oyama M."/>
            <person name="Hata H."/>
            <person name="Watanabe M."/>
            <person name="Komatsu T."/>
            <person name="Mizushima-Sugano J."/>
            <person name="Satoh T."/>
            <person name="Shirai Y."/>
            <person name="Takahashi Y."/>
            <person name="Nakagawa K."/>
            <person name="Okumura K."/>
            <person name="Nagase T."/>
            <person name="Nomura N."/>
            <person name="Kikuchi H."/>
            <person name="Masuho Y."/>
            <person name="Yamashita R."/>
            <person name="Nakai K."/>
            <person name="Yada T."/>
            <person name="Nakamura Y."/>
            <person name="Ohara O."/>
            <person name="Isogai T."/>
            <person name="Sugano S."/>
        </authorList>
    </citation>
    <scope>NUCLEOTIDE SEQUENCE [LARGE SCALE MRNA]</scope>
    <source>
        <tissue>Placenta</tissue>
    </source>
</reference>
<reference key="6">
    <citation type="submission" date="2004-06" db="EMBL/GenBank/DDBJ databases">
        <title>Cloning of human full open reading frames in Gateway(TM) system entry vector (pDONR201).</title>
        <authorList>
            <person name="Ebert L."/>
            <person name="Schick M."/>
            <person name="Neubert P."/>
            <person name="Schatten R."/>
            <person name="Henze S."/>
            <person name="Korn B."/>
        </authorList>
    </citation>
    <scope>NUCLEOTIDE SEQUENCE [LARGE SCALE MRNA]</scope>
</reference>
<reference key="7">
    <citation type="journal article" date="2005" name="Nature">
        <title>Generation and annotation of the DNA sequences of human chromosomes 2 and 4.</title>
        <authorList>
            <person name="Hillier L.W."/>
            <person name="Graves T.A."/>
            <person name="Fulton R.S."/>
            <person name="Fulton L.A."/>
            <person name="Pepin K.H."/>
            <person name="Minx P."/>
            <person name="Wagner-McPherson C."/>
            <person name="Layman D."/>
            <person name="Wylie K."/>
            <person name="Sekhon M."/>
            <person name="Becker M.C."/>
            <person name="Fewell G.A."/>
            <person name="Delehaunty K.D."/>
            <person name="Miner T.L."/>
            <person name="Nash W.E."/>
            <person name="Kremitzki C."/>
            <person name="Oddy L."/>
            <person name="Du H."/>
            <person name="Sun H."/>
            <person name="Bradshaw-Cordum H."/>
            <person name="Ali J."/>
            <person name="Carter J."/>
            <person name="Cordes M."/>
            <person name="Harris A."/>
            <person name="Isak A."/>
            <person name="van Brunt A."/>
            <person name="Nguyen C."/>
            <person name="Du F."/>
            <person name="Courtney L."/>
            <person name="Kalicki J."/>
            <person name="Ozersky P."/>
            <person name="Abbott S."/>
            <person name="Armstrong J."/>
            <person name="Belter E.A."/>
            <person name="Caruso L."/>
            <person name="Cedroni M."/>
            <person name="Cotton M."/>
            <person name="Davidson T."/>
            <person name="Desai A."/>
            <person name="Elliott G."/>
            <person name="Erb T."/>
            <person name="Fronick C."/>
            <person name="Gaige T."/>
            <person name="Haakenson W."/>
            <person name="Haglund K."/>
            <person name="Holmes A."/>
            <person name="Harkins R."/>
            <person name="Kim K."/>
            <person name="Kruchowski S.S."/>
            <person name="Strong C.M."/>
            <person name="Grewal N."/>
            <person name="Goyea E."/>
            <person name="Hou S."/>
            <person name="Levy A."/>
            <person name="Martinka S."/>
            <person name="Mead K."/>
            <person name="McLellan M.D."/>
            <person name="Meyer R."/>
            <person name="Randall-Maher J."/>
            <person name="Tomlinson C."/>
            <person name="Dauphin-Kohlberg S."/>
            <person name="Kozlowicz-Reilly A."/>
            <person name="Shah N."/>
            <person name="Swearengen-Shahid S."/>
            <person name="Snider J."/>
            <person name="Strong J.T."/>
            <person name="Thompson J."/>
            <person name="Yoakum M."/>
            <person name="Leonard S."/>
            <person name="Pearman C."/>
            <person name="Trani L."/>
            <person name="Radionenko M."/>
            <person name="Waligorski J.E."/>
            <person name="Wang C."/>
            <person name="Rock S.M."/>
            <person name="Tin-Wollam A.-M."/>
            <person name="Maupin R."/>
            <person name="Latreille P."/>
            <person name="Wendl M.C."/>
            <person name="Yang S.-P."/>
            <person name="Pohl C."/>
            <person name="Wallis J.W."/>
            <person name="Spieth J."/>
            <person name="Bieri T.A."/>
            <person name="Berkowicz N."/>
            <person name="Nelson J.O."/>
            <person name="Osborne J."/>
            <person name="Ding L."/>
            <person name="Meyer R."/>
            <person name="Sabo A."/>
            <person name="Shotland Y."/>
            <person name="Sinha P."/>
            <person name="Wohldmann P.E."/>
            <person name="Cook L.L."/>
            <person name="Hickenbotham M.T."/>
            <person name="Eldred J."/>
            <person name="Williams D."/>
            <person name="Jones T.A."/>
            <person name="She X."/>
            <person name="Ciccarelli F.D."/>
            <person name="Izaurralde E."/>
            <person name="Taylor J."/>
            <person name="Schmutz J."/>
            <person name="Myers R.M."/>
            <person name="Cox D.R."/>
            <person name="Huang X."/>
            <person name="McPherson J.D."/>
            <person name="Mardis E.R."/>
            <person name="Clifton S.W."/>
            <person name="Warren W.C."/>
            <person name="Chinwalla A.T."/>
            <person name="Eddy S.R."/>
            <person name="Marra M.A."/>
            <person name="Ovcharenko I."/>
            <person name="Furey T.S."/>
            <person name="Miller W."/>
            <person name="Eichler E.E."/>
            <person name="Bork P."/>
            <person name="Suyama M."/>
            <person name="Torrents D."/>
            <person name="Waterston R.H."/>
            <person name="Wilson R.K."/>
        </authorList>
    </citation>
    <scope>NUCLEOTIDE SEQUENCE [LARGE SCALE GENOMIC DNA]</scope>
</reference>
<reference key="8">
    <citation type="submission" date="2005-09" db="EMBL/GenBank/DDBJ databases">
        <authorList>
            <person name="Mural R.J."/>
            <person name="Istrail S."/>
            <person name="Sutton G."/>
            <person name="Florea L."/>
            <person name="Halpern A.L."/>
            <person name="Mobarry C.M."/>
            <person name="Lippert R."/>
            <person name="Walenz B."/>
            <person name="Shatkay H."/>
            <person name="Dew I."/>
            <person name="Miller J.R."/>
            <person name="Flanigan M.J."/>
            <person name="Edwards N.J."/>
            <person name="Bolanos R."/>
            <person name="Fasulo D."/>
            <person name="Halldorsson B.V."/>
            <person name="Hannenhalli S."/>
            <person name="Turner R."/>
            <person name="Yooseph S."/>
            <person name="Lu F."/>
            <person name="Nusskern D.R."/>
            <person name="Shue B.C."/>
            <person name="Zheng X.H."/>
            <person name="Zhong F."/>
            <person name="Delcher A.L."/>
            <person name="Huson D.H."/>
            <person name="Kravitz S.A."/>
            <person name="Mouchard L."/>
            <person name="Reinert K."/>
            <person name="Remington K.A."/>
            <person name="Clark A.G."/>
            <person name="Waterman M.S."/>
            <person name="Eichler E.E."/>
            <person name="Adams M.D."/>
            <person name="Hunkapiller M.W."/>
            <person name="Myers E.W."/>
            <person name="Venter J.C."/>
        </authorList>
    </citation>
    <scope>NUCLEOTIDE SEQUENCE [LARGE SCALE GENOMIC DNA]</scope>
</reference>
<reference key="9">
    <citation type="journal article" date="2004" name="Genome Res.">
        <title>The status, quality, and expansion of the NIH full-length cDNA project: the Mammalian Gene Collection (MGC).</title>
        <authorList>
            <consortium name="The MGC Project Team"/>
        </authorList>
    </citation>
    <scope>NUCLEOTIDE SEQUENCE [LARGE SCALE MRNA]</scope>
    <source>
        <tissue>Blood</tissue>
        <tissue>Testis</tissue>
    </source>
</reference>
<reference key="10">
    <citation type="submission" date="1999-07" db="EMBL/GenBank/DDBJ databases">
        <authorList>
            <person name="Hui R.T."/>
            <person name="Zhao B."/>
            <person name="Sheng H."/>
            <person name="Qin B.M."/>
            <person name="Liu Y.Q."/>
            <person name="Liu B."/>
            <person name="Wang X.Y."/>
            <person name="Xu H.S."/>
            <person name="Zhang Q."/>
            <person name="Tong Y.K."/>
            <person name="Song L."/>
            <person name="Ji X.J."/>
            <person name="Liu B.H."/>
            <person name="Lu H."/>
            <person name="Chen J.Z."/>
            <person name="Cai M.Q."/>
            <person name="Zheng W.Y."/>
            <person name="Teng C.Y."/>
            <person name="Liu Q."/>
            <person name="Yu L.T."/>
            <person name="Lin J."/>
            <person name="Gong Q."/>
            <person name="Zhang A.M."/>
            <person name="Gao R.L."/>
        </authorList>
    </citation>
    <scope>NUCLEOTIDE SEQUENCE [LARGE SCALE MRNA] OF 1-133</scope>
    <source>
        <tissue>Aorta</tissue>
    </source>
</reference>
<reference key="11">
    <citation type="journal article" date="2004" name="Hum. Genet.">
        <title>Analysis of genes implicated in iron regulation in individuals presenting with primary iron overload.</title>
        <authorList>
            <person name="Zaahl M.G."/>
            <person name="Merryweather-Clarke A.T."/>
            <person name="Kotze M.J."/>
            <person name="van der Merwe S."/>
            <person name="Warnich L."/>
            <person name="Robson K.J.H."/>
        </authorList>
    </citation>
    <scope>NUCLEOTIDE SEQUENCE [GENOMIC DNA] OF 1-6; 16-129 AND 255-316</scope>
    <scope>VARIANT HFE4 VAL-270</scope>
</reference>
<reference key="12">
    <citation type="journal article" date="2005" name="Blood">
        <title>In vitro functional analysis of human ferroportin (FPN) and hemochromatosis-associated FPN mutations.</title>
        <authorList>
            <person name="Schimanski L.M."/>
            <person name="Drakesmith H."/>
            <person name="Merryweather-Clarke A.T."/>
            <person name="Viprakasit V."/>
            <person name="Edwards J.P."/>
            <person name="Sweetland E."/>
            <person name="Bastin J.M."/>
            <person name="Cowley D."/>
            <person name="Chinthammitr Y."/>
            <person name="Robson K.J."/>
            <person name="Townsend A.R."/>
        </authorList>
    </citation>
    <scope>FUNCTION</scope>
    <scope>TRANSPORTER ACTIVITY</scope>
    <scope>MUTAGENESIS OF LEU-170</scope>
    <scope>SUBCELLULAR LOCATION</scope>
    <scope>CHARACTERIZATION OF VARIANTS HFE4 ASP-77 AND GLY-490</scope>
</reference>
<reference key="13">
    <citation type="journal article" date="2012" name="Biochim. Biophys. Acta">
        <title>The iron transporter ferroportin can also function as a manganese exporter.</title>
        <authorList>
            <person name="Madejczyk M.S."/>
            <person name="Ballatori N."/>
        </authorList>
    </citation>
    <scope>FUNCTION</scope>
    <scope>TRANSPORTER ACTIVITY</scope>
    <scope>CAUTION</scope>
</reference>
<reference key="14">
    <citation type="journal article" date="2014" name="Am. J. Physiol.">
        <title>Functional properties of human ferroportin, a cellular iron exporter reactive also with cobalt and zinc.</title>
        <authorList>
            <person name="Mitchell C.J."/>
            <person name="Shawki A."/>
            <person name="Ganz T."/>
            <person name="Nemeth E."/>
            <person name="Mackenzie B."/>
        </authorList>
    </citation>
    <scope>SUBCELLULAR LOCATION</scope>
    <scope>FUNCTION</scope>
    <scope>TRANSPORTER ACTIVITY</scope>
</reference>
<reference key="15">
    <citation type="journal article" date="2012" name="Cell Metab.">
        <title>Hepcidin-induced endocytosis of ferroportin is dependent on ferroportin ubiquitination.</title>
        <authorList>
            <person name="Qiao B."/>
            <person name="Sugianto P."/>
            <person name="Fung E."/>
            <person name="Del-Castillo-Rueda A."/>
            <person name="Moran-Jimenez M.J."/>
            <person name="Ganz T."/>
            <person name="Nemeth E."/>
        </authorList>
    </citation>
    <scope>FUNCTION</scope>
    <scope>TRANSPORTER ACTIVITY</scope>
    <scope>INTERACTION WITH HAMP</scope>
    <scope>UBIQUITINATION</scope>
    <scope>MUTAGENESIS OF LYS-236; LYS-240; LYS-253 AND CYS-326</scope>
</reference>
<reference key="16">
    <citation type="journal article" date="2013" name="Biochim. Biophys. Acta">
        <title>Stomatin interacts with GLUT1/SLC2A1, band 3/SLC4A1, and aquaporin-1 in human erythrocyte membrane domains.</title>
        <authorList>
            <person name="Rungaldier S."/>
            <person name="Oberwagner W."/>
            <person name="Salzer U."/>
            <person name="Csaszar E."/>
            <person name="Prohaska R."/>
        </authorList>
    </citation>
    <scope>SUBCELLULAR LOCATION</scope>
    <scope>TISSUE SPECIFICITY</scope>
    <scope>IDENTIFICATION IN A COMPLEX WITH STOM</scope>
    <scope>SUBUNIT</scope>
</reference>
<reference key="17">
    <citation type="journal article" date="2018" name="Blood">
        <title>Structure-function analysis of ferroportin defines the binding site and an alternative mechanism of action of hepcidin.</title>
        <authorList>
            <person name="Aschemeyer S."/>
            <person name="Qiao B."/>
            <person name="Stefanova D."/>
            <person name="Valore E.V."/>
            <person name="Sek A.C."/>
            <person name="Ruwe T.A."/>
            <person name="Vieth K.R."/>
            <person name="Jung G."/>
            <person name="Casu C."/>
            <person name="Rivella S."/>
            <person name="Jormakka M."/>
            <person name="Mackenzie B."/>
            <person name="Ganz T."/>
            <person name="Nemeth E."/>
        </authorList>
    </citation>
    <scope>FUNCTION</scope>
    <scope>TRANSPORTER ACTIVITY</scope>
    <scope>SUBCELLULAR LOCATION</scope>
    <scope>INTERACTION WITH HAMP</scope>
    <scope>MUTAGENESIS OF LYS-240; CYS-326; TYR-501 AND ASP-504</scope>
    <scope>CHARACTERIZATION OF VARIANT HFE4 ASP-144</scope>
</reference>
<reference key="18">
    <citation type="journal article" date="2018" name="Am. J. Physiol.">
        <title>Manganese transport and toxicity in polarized WIF-B hepatocytes.</title>
        <authorList>
            <person name="Thompson K.J."/>
            <person name="Hein J."/>
            <person name="Baez A."/>
            <person name="Sosa J.C."/>
            <person name="Wessling-Resnick M."/>
        </authorList>
    </citation>
    <scope>SUBCELLULAR LOCATION</scope>
    <scope>CAUTION</scope>
</reference>
<reference key="19">
    <citation type="journal article" date="2018" name="Science">
        <title>Erythrocytic ferroportin reduces intracellular iron accumulation, hemolysis, and malaria risk.</title>
        <authorList>
            <person name="Zhang D.L."/>
            <person name="Wu J."/>
            <person name="Shah B.N."/>
            <person name="Greutelaers K.C."/>
            <person name="Ghosh M.C."/>
            <person name="Ollivierre H."/>
            <person name="Su X.Z."/>
            <person name="Thuma P.E."/>
            <person name="Bedu-Addo G."/>
            <person name="Mockenhaupt F.P."/>
            <person name="Gordeuk V.R."/>
            <person name="Rouault T.A."/>
        </authorList>
    </citation>
    <scope>FUNCTION</scope>
    <scope>TRANSPORTER ACTIVITY</scope>
    <scope>TISSUE SPECIFICITY</scope>
    <scope>CHARACTERIZATION OF VARIANT HIS-248</scope>
</reference>
<reference key="20">
    <citation type="journal article" date="2019" name="FASEB J.">
        <title>Ferroportin disease mutations influence manganese accumulation and cytotoxicity.</title>
        <authorList>
            <person name="Choi E.K."/>
            <person name="Nguyen T.T."/>
            <person name="Iwase S."/>
            <person name="Seo Y.A."/>
        </authorList>
    </citation>
    <scope>FUNCTION</scope>
    <scope>TRANSPORTER ACTIVITY</scope>
    <scope>MUTAGENESIS OF ARG-88; ASP-157 AND SER-338</scope>
    <scope>SUBCELLULAR LOCATION</scope>
    <scope>CHARACTERIZATION OF VARIANTS HFE4 SER-80; HIS-144 AND CYS-326</scope>
</reference>
<reference key="21">
    <citation type="journal article" date="2023" name="J. Biomed. Sci.">
        <title>Apo- and holo-transferrin differentially interact with hephaestin and ferroportin in a novel mechanism of cellular iron release regulation.</title>
        <authorList>
            <person name="Baringer S.L."/>
            <person name="Palsa K."/>
            <person name="Spiegelman V.S."/>
            <person name="Simpson I.A."/>
            <person name="Connor J.R."/>
        </authorList>
    </citation>
    <scope>SUBUNIT</scope>
    <scope>UBIQUITINATION</scope>
</reference>
<reference evidence="36 37" key="22">
    <citation type="journal article" date="2020" name="Nature">
        <title>Structure of hepcidin-bound ferroportin reveals iron homeostatic mechanisms.</title>
        <authorList>
            <person name="Billesbolle C.B."/>
            <person name="Azumaya C.M."/>
            <person name="Kretsch R.C."/>
            <person name="Powers A.S."/>
            <person name="Gonen S."/>
            <person name="Schneider S."/>
            <person name="Arvedson T."/>
            <person name="Dror R.O."/>
            <person name="Cheng Y."/>
            <person name="Manglik A."/>
        </authorList>
    </citation>
    <scope>STRUCTURE BY ELECTRON MICROSCOPY (2.50 ANGSTROMS) IN COMPLEX WITH COBALT</scope>
    <scope>INTERACTION WITH HAMP</scope>
    <scope>FUNCTION</scope>
    <scope>TOPOLOGY</scope>
</reference>
<reference key="23">
    <citation type="journal article" date="2001" name="J. Clin. Invest.">
        <title>Autosomal-dominant hemochromatosis is associated with a mutation in the ferroportin (SLC11A3) gene.</title>
        <authorList>
            <person name="Montosi G."/>
            <person name="Donovan A."/>
            <person name="Totaro A."/>
            <person name="Garuti C."/>
            <person name="Pignatti E."/>
            <person name="Cassanelli S."/>
            <person name="Trenor C.C."/>
            <person name="Gasparini P."/>
            <person name="Andrews N.C."/>
            <person name="Pietrangelo A."/>
        </authorList>
    </citation>
    <scope>VARIANT HFE4 ASP-77</scope>
</reference>
<reference key="24">
    <citation type="journal article" date="2001" name="Nat. Genet.">
        <title>A mutation in SLC11A3 is associated with autosomal dominant hemochromatosis.</title>
        <authorList>
            <person name="Njajou O.T."/>
            <person name="Vaessen N."/>
            <person name="Joosse M."/>
            <person name="Berghuis B."/>
            <person name="van Dongen J.W.F."/>
            <person name="Breuning M.H."/>
            <person name="Snijders P.J.L.M."/>
            <person name="Rutten W.P.F."/>
            <person name="Sandkuijl L.A."/>
            <person name="Oostra B.A."/>
            <person name="van Duijn C.M."/>
            <person name="Heutink P."/>
        </authorList>
    </citation>
    <scope>VARIANT HFE4 HIS-144</scope>
</reference>
<reference key="25">
    <citation type="journal article" date="2002" name="Blood">
        <title>Novel mutation in ferroportin1 is associated with autosomal dominant hemochromatosis.</title>
        <authorList>
            <person name="Wallace D.F."/>
            <person name="Pedersen P."/>
            <person name="Dixon J.L."/>
            <person name="Stephenson P."/>
            <person name="Searle J.W."/>
            <person name="Powell L.W."/>
            <person name="Subramaniam V.N."/>
        </authorList>
    </citation>
    <scope>VARIANT HFE4 VAL-162 DEL</scope>
</reference>
<reference key="26">
    <citation type="journal article" date="2002" name="Blood">
        <title>Autosomal dominant reticuloendothelial iron overload associated with a 3-base pair deletion in the ferroportin 1 gene (SLC11A3).</title>
        <authorList>
            <person name="Devalia V."/>
            <person name="Carter K."/>
            <person name="Walker A.P."/>
            <person name="Perkins S.J."/>
            <person name="Worwood M."/>
            <person name="May A."/>
            <person name="Dooley J.S."/>
        </authorList>
    </citation>
    <scope>VARIANT HFE4 VAL-162 DEL</scope>
</reference>
<reference key="27">
    <citation type="journal article" date="2002" name="Blood">
        <title>A valine deletion of ferroportin 1: a common mutation in hemochromastosis type 4.</title>
        <authorList>
            <person name="Roetto A."/>
            <person name="Merryweather-Clarke A.T."/>
            <person name="Daraio F."/>
            <person name="Livesey K."/>
            <person name="Pointon J.J."/>
            <person name="Barbabietola G."/>
            <person name="Piga A."/>
            <person name="Mackie P.H."/>
            <person name="Robson K.J.H."/>
            <person name="Camaschella C."/>
        </authorList>
    </citation>
    <scope>VARIANT HFE4 VAL-162 DEL</scope>
</reference>
<reference key="28">
    <citation type="journal article" date="2002" name="Br. J. Haematol.">
        <title>Genetic hyperferritinaemia and reticuloendothelial iron overload associated with a three base pair deletion in the coding region of the ferroportin gene (SLC11A3).</title>
        <authorList>
            <person name="Cazzola M."/>
            <person name="Cremonesi L."/>
            <person name="Papaioannou M."/>
            <person name="Soriani N."/>
            <person name="Kioumi A."/>
            <person name="Charalambidou A."/>
            <person name="Paroni R."/>
            <person name="Romtsou K."/>
            <person name="Levi S."/>
            <person name="Ferrari M."/>
            <person name="Arosio P."/>
            <person name="Christakis J."/>
        </authorList>
    </citation>
    <scope>VARIANT HFE4 VAL-162 DEL</scope>
</reference>
<reference key="29">
    <citation type="journal article" date="2003" name="Blood">
        <title>Molecular analyses of patients with hyperferritinemia and normal serum iron values reveal both L ferritin IRE and 3 new ferroportin (SLC11A3) mutations.</title>
        <authorList>
            <person name="Hetet G."/>
            <person name="Devaux I."/>
            <person name="Soufir N."/>
            <person name="Grandchamp B."/>
            <person name="Beaumont C."/>
        </authorList>
    </citation>
    <scope>VARIANTS HFE4 GLY-157; HIS-182 AND VAL-323</scope>
</reference>
<reference key="30">
    <citation type="journal article" date="2003" name="Blood Cells Mol. Dis.">
        <title>Iron overload in Africans and African-Americans and a common mutation in the SCL40A1 (ferroportin 1) gene.</title>
        <authorList>
            <person name="Gordeuk V.R."/>
            <person name="Caleffi A."/>
            <person name="Corradini E."/>
            <person name="Ferrara F."/>
            <person name="Jones R.A."/>
            <person name="Castro O."/>
            <person name="Onyekwere O."/>
            <person name="Kittles R."/>
            <person name="Pignatti E."/>
            <person name="Montosi G."/>
            <person name="Garuti C."/>
            <person name="Gangaidzo I.T."/>
            <person name="Gomo Z.A.R."/>
            <person name="Moyo V.M."/>
            <person name="Rouault T.A."/>
            <person name="MacPhail P."/>
            <person name="Pietrangelo A."/>
        </authorList>
    </citation>
    <scope>VARIANT HIS-248</scope>
</reference>
<reference key="31">
    <citation type="journal article" date="2003" name="Gut">
        <title>A novel mutation in ferroportin1 is associated with haemochromatosis in a Solomon Islands patient.</title>
        <authorList>
            <person name="Arden K.E."/>
            <person name="Wallace D.F."/>
            <person name="Dixon J.L."/>
            <person name="Summerville L."/>
            <person name="Searle J.W."/>
            <person name="Anderson G.J."/>
            <person name="Ramm G.A."/>
            <person name="Powell L.W."/>
            <person name="Subramaniam V.N."/>
        </authorList>
    </citation>
    <scope>VARIANT HFE4 THR-144</scope>
</reference>
<reference key="32">
    <citation type="journal article" date="2003" name="Haematologica">
        <title>Autosomal dominant reticuloendothelial iron overload (HFE type 4) due to a new missense mutation in the FERROPORTIN 1 gene (SLC11A3) in a large French-Canadian family.</title>
        <authorList>
            <person name="Rivard S.R."/>
            <person name="Lanzara C."/>
            <person name="Grimard D."/>
            <person name="Carella M."/>
            <person name="Simard H."/>
            <person name="Ficarella R."/>
            <person name="Simard R."/>
            <person name="D'Adamo A.P."/>
            <person name="De Braekeleer M."/>
            <person name="Gasparini P."/>
        </authorList>
    </citation>
    <scope>VARIANT HFE4 ASN-64</scope>
</reference>
<reference key="33">
    <citation type="journal article" date="2003" name="J. Hepatol.">
        <title>Novel mutation in ferroportin 1 gene is associated with autosomal dominant iron overload.</title>
        <authorList>
            <person name="Jouanolle A.-M."/>
            <person name="Douabin-Gicquel V."/>
            <person name="Halimi C."/>
            <person name="Loreal O."/>
            <person name="Fergelot P."/>
            <person name="Delacour T."/>
            <person name="de Lajarte-Thirouard A.-S."/>
            <person name="Turlin B."/>
            <person name="Le Gall J.-Y."/>
            <person name="Cadet E."/>
            <person name="Rochette J."/>
            <person name="David V."/>
            <person name="Brissot P."/>
        </authorList>
    </citation>
    <scope>VARIANT HFE4 ASP-490</scope>
</reference>
<reference key="34">
    <citation type="journal article" date="2004" name="Blood Cells Mol. Dis.">
        <title>The ferroportin disease.</title>
        <authorList>
            <person name="Pietrangelo A."/>
        </authorList>
    </citation>
    <scope>VARIANT HFE4 SER-80</scope>
    <scope>VARIANT IRON OVERLOAD ILE-174</scope>
</reference>
<reference key="35">
    <citation type="journal article" date="2004" name="J. Med. Genet.">
        <title>Recent advances in understanding haemochromatosis: a transition state.</title>
        <authorList>
            <person name="Robson K.J.H."/>
            <person name="Merryweather-Clarke A.T."/>
            <person name="Cadet E."/>
            <person name="Viprakasit V."/>
            <person name="Zaahl M.G."/>
            <person name="Pointon J.J."/>
            <person name="Weatherall D.J."/>
            <person name="Rochette J."/>
        </authorList>
    </citation>
    <scope>VARIANTS HFE4 ASP-144 AND VAL-270</scope>
    <scope>VARIANT IRON OVERLOAD TYR-326</scope>
</reference>
<reference key="36">
    <citation type="journal article" date="2004" name="J. Med. Genet.">
        <authorList>
            <person name="Robson K.J.H."/>
            <person name="Merryweather-Clarke A.T."/>
            <person name="Cadet E."/>
            <person name="Viprakasit V."/>
            <person name="Zaahl M.G."/>
            <person name="Pointon J.J."/>
            <person name="Weatherall D.J."/>
            <person name="Rochette J."/>
        </authorList>
    </citation>
    <scope>ERRATUM OF PUBMED:15466004</scope>
</reference>
<reference key="37">
    <citation type="journal article" date="2005" name="Br. J. Haematol.">
        <title>Genetic and clinical heterogeneity of ferroportin disease.</title>
        <authorList>
            <person name="Cremonesi L."/>
            <person name="Forni G.L."/>
            <person name="Soriani N."/>
            <person name="Lamagna M."/>
            <person name="Fermo I."/>
            <person name="Daraio F."/>
            <person name="Galli A."/>
            <person name="Pietra D."/>
            <person name="Malcovati L."/>
            <person name="Ferrari M."/>
            <person name="Camaschella C."/>
            <person name="Cazzola M."/>
        </authorList>
    </citation>
    <scope>VARIANTS HFE4 VAL-80; VAL-181 AND ASP-267</scope>
</reference>
<reference key="38">
    <citation type="journal article" date="2006" name="Br. J. Haematol.">
        <authorList>
            <person name="Cremonesi L."/>
            <person name="Forni G.L."/>
            <person name="Soriani N."/>
            <person name="Lamagna M."/>
            <person name="Fermo I."/>
            <person name="Daraio F."/>
            <person name="Galli A."/>
            <person name="Pietra D."/>
            <person name="Malcovati L."/>
            <person name="Ferrari M."/>
            <person name="Camaschella C."/>
            <person name="Cazzola M."/>
        </authorList>
    </citation>
    <scope>ERRATUM OF PUBMED:16351644</scope>
</reference>
<sequence>MTRAGDHNRQRGCCGSLADYLTSAKFLLYLGHSLSTWGDRMWHFAVSVFLVELYGNSLLLTAVYGLVVAGSVLVLGAIIGDWVDKNARLKVAQTSLVVQNVSVILCGIILMMVFLHKHELLTMYHGWVLTSCYILIITIANIANLASTATAITIQRDWIVVVAGEDRSKLANMNATIRRIDQLTNILAPMAVGQIMTFGSPVIGCGFISGWNLVSMCVEYVLLWKVYQKTPALAVKAGLKEEETELKQLNLHKDTEPKPLEGTHLMGVKDSNIHELEHEQEPTCASQMAEPFRTFRDGWVSYYNQPVFLAGMGLAFLYMTVLGFDCITTGYAYTQGLSGSILSILMGASAITGIMGTVAFTWLRRKCGLVRTGLISGLAQLSCLILCVISVFMPGSPLDLSVSPFEDIRSRFIQGESITPTKIPEITTEIYMSNGSNSANIVPETSPESVPIISVSLLFAGVIAARIGLWSFDLTVTQLLQENVIESERGIINGVQNSMNYLLDLLHFIMVILAPNPEAFGLLVLISVSFVAMGHIMYFRFAQNTLGNKLFACGPDAKEVRKENQANTSVV</sequence>
<gene>
    <name evidence="35" type="primary">SLC40A1</name>
    <name evidence="31" type="synonym">FPN</name>
    <name type="synonym">FPN1</name>
    <name type="synonym">IREG1</name>
    <name type="synonym">SLC11A3</name>
    <name type="ORF">MSTP079</name>
</gene>
<accession>Q9NP59</accession>
<accession>Q6FI62</accession>
<accession>Q7Z4F8</accession>
<accession>Q8IVB2</accession>
<accession>Q9NRL0</accession>
<organism>
    <name type="scientific">Homo sapiens</name>
    <name type="common">Human</name>
    <dbReference type="NCBI Taxonomy" id="9606"/>
    <lineage>
        <taxon>Eukaryota</taxon>
        <taxon>Metazoa</taxon>
        <taxon>Chordata</taxon>
        <taxon>Craniata</taxon>
        <taxon>Vertebrata</taxon>
        <taxon>Euteleostomi</taxon>
        <taxon>Mammalia</taxon>
        <taxon>Eutheria</taxon>
        <taxon>Euarchontoglires</taxon>
        <taxon>Primates</taxon>
        <taxon>Haplorrhini</taxon>
        <taxon>Catarrhini</taxon>
        <taxon>Hominidae</taxon>
        <taxon>Homo</taxon>
    </lineage>
</organism>
<protein>
    <recommendedName>
        <fullName evidence="33">Ferroportin</fullName>
    </recommendedName>
    <alternativeName>
        <fullName>Ferroportin-1</fullName>
    </alternativeName>
    <alternativeName>
        <fullName>Iron-regulated transporter 1</fullName>
    </alternativeName>
    <alternativeName>
        <fullName evidence="35">Solute carrier family 40 member 1</fullName>
    </alternativeName>
</protein>
<keyword id="KW-0002">3D-structure</keyword>
<keyword id="KW-1003">Cell membrane</keyword>
<keyword id="KW-0225">Disease variant</keyword>
<keyword id="KW-0325">Glycoprotein</keyword>
<keyword id="KW-0406">Ion transport</keyword>
<keyword id="KW-0408">Iron</keyword>
<keyword id="KW-0410">Iron transport</keyword>
<keyword id="KW-0472">Membrane</keyword>
<keyword id="KW-0479">Metal-binding</keyword>
<keyword id="KW-1267">Proteomics identification</keyword>
<keyword id="KW-1185">Reference proteome</keyword>
<keyword id="KW-0812">Transmembrane</keyword>
<keyword id="KW-1133">Transmembrane helix</keyword>
<keyword id="KW-0813">Transport</keyword>
<keyword id="KW-0832">Ubl conjugation</keyword>
<feature type="chain" id="PRO_0000191310" description="Ferroportin">
    <location>
        <begin position="1"/>
        <end position="571"/>
    </location>
</feature>
<feature type="topological domain" description="Cytoplasmic" evidence="34">
    <location>
        <begin position="1"/>
        <end position="23"/>
    </location>
</feature>
<feature type="transmembrane region" description="Helical" evidence="29 36">
    <location>
        <begin position="24"/>
        <end position="53"/>
    </location>
</feature>
<feature type="topological domain" description="Extracellular" evidence="34">
    <location>
        <begin position="54"/>
        <end position="57"/>
    </location>
</feature>
<feature type="transmembrane region" description="Helical" evidence="29 36">
    <location>
        <begin position="58"/>
        <end position="84"/>
    </location>
</feature>
<feature type="topological domain" description="Cytoplasmic" evidence="34">
    <location>
        <begin position="85"/>
        <end position="87"/>
    </location>
</feature>
<feature type="transmembrane region" description="Helical" evidence="29 36">
    <location>
        <begin position="88"/>
        <end position="118"/>
    </location>
</feature>
<feature type="topological domain" description="Extracellular" evidence="34">
    <location>
        <begin position="119"/>
        <end position="126"/>
    </location>
</feature>
<feature type="transmembrane region" description="Helical" evidence="29 36">
    <location>
        <begin position="127"/>
        <end position="162"/>
    </location>
</feature>
<feature type="topological domain" description="Cytoplasmic" evidence="34">
    <location>
        <begin position="163"/>
        <end position="164"/>
    </location>
</feature>
<feature type="transmembrane region" description="Helical" evidence="29 36">
    <location>
        <begin position="165"/>
        <end position="195"/>
    </location>
</feature>
<feature type="topological domain" description="Extracellular" evidence="34">
    <location>
        <begin position="196"/>
        <end position="202"/>
    </location>
</feature>
<feature type="transmembrane region" description="Helical" evidence="29 36">
    <location>
        <begin position="203"/>
        <end position="229"/>
    </location>
</feature>
<feature type="topological domain" description="Cytoplasmic" evidence="34">
    <location>
        <begin position="230"/>
        <end position="306"/>
    </location>
</feature>
<feature type="transmembrane region" description="Helical" evidence="29 36">
    <location>
        <begin position="307"/>
        <end position="333"/>
    </location>
</feature>
<feature type="topological domain" description="Extracellular" evidence="34">
    <location>
        <begin position="334"/>
        <end position="338"/>
    </location>
</feature>
<feature type="transmembrane region" description="Helical" evidence="29 36">
    <location>
        <begin position="339"/>
        <end position="366"/>
    </location>
</feature>
<feature type="topological domain" description="Cytoplasmic" evidence="34">
    <location>
        <begin position="367"/>
        <end position="368"/>
    </location>
</feature>
<feature type="transmembrane region" description="Helical" evidence="29 36">
    <location>
        <begin position="369"/>
        <end position="391"/>
    </location>
</feature>
<feature type="topological domain" description="Extracellular" evidence="34">
    <location>
        <begin position="392"/>
        <end position="453"/>
    </location>
</feature>
<feature type="transmembrane region" description="Helical" evidence="29 36">
    <location>
        <begin position="454"/>
        <end position="483"/>
    </location>
</feature>
<feature type="topological domain" description="Cytoplasmic" evidence="34">
    <location>
        <begin position="484"/>
        <end position="488"/>
    </location>
</feature>
<feature type="transmembrane region" description="Helical" evidence="29 36">
    <location>
        <begin position="489"/>
        <end position="513"/>
    </location>
</feature>
<feature type="topological domain" description="Extracellular" evidence="34">
    <location>
        <begin position="514"/>
        <end position="516"/>
    </location>
</feature>
<feature type="transmembrane region" description="Helical" evidence="29 36">
    <location>
        <begin position="517"/>
        <end position="542"/>
    </location>
</feature>
<feature type="topological domain" description="Cytoplasmic" evidence="34">
    <location>
        <begin position="543"/>
        <end position="571"/>
    </location>
</feature>
<feature type="binding site" evidence="34">
    <location>
        <position position="39"/>
    </location>
    <ligand>
        <name>Fe cation</name>
        <dbReference type="ChEBI" id="CHEBI:24875"/>
        <label>1</label>
    </ligand>
</feature>
<feature type="binding site" evidence="34">
    <location>
        <position position="43"/>
    </location>
    <ligand>
        <name>Fe cation</name>
        <dbReference type="ChEBI" id="CHEBI:24875"/>
        <label>1</label>
    </ligand>
</feature>
<feature type="binding site" evidence="34">
    <location>
        <position position="326"/>
    </location>
    <ligand>
        <name>Fe cation</name>
        <dbReference type="ChEBI" id="CHEBI:24875"/>
        <label>2</label>
    </ligand>
</feature>
<feature type="binding site" evidence="34">
    <location>
        <position position="507"/>
    </location>
    <ligand>
        <name>Fe cation</name>
        <dbReference type="ChEBI" id="CHEBI:24875"/>
        <label>2</label>
    </ligand>
</feature>
<feature type="glycosylation site" description="N-linked (GlcNAc...) asparagine" evidence="2">
    <location>
        <position position="434"/>
    </location>
</feature>
<feature type="sequence variant" id="VAR_030057" description="In HFE4; dbSNP:rs1285653301." evidence="12">
    <original>Y</original>
    <variation>N</variation>
    <location>
        <position position="64"/>
    </location>
</feature>
<feature type="sequence variant" id="VAR_022594" description="In HFE4; loss of iron export function; dbSNP:rs28939076." evidence="3 6 19">
    <original>A</original>
    <variation>D</variation>
    <location>
        <position position="77"/>
    </location>
</feature>
<feature type="sequence variant" id="VAR_030058" description="In HFE4; Reduces protein stability. Loss of cell surface localization. Loss of iron export function. Increases intracellular manganese; dbSNP:rs978427853." evidence="16 28">
    <original>G</original>
    <variation>S</variation>
    <location>
        <position position="80"/>
    </location>
</feature>
<feature type="sequence variant" id="VAR_030059" description="In HFE4; dbSNP:rs104893673." evidence="20">
    <original>G</original>
    <variation>V</variation>
    <location>
        <position position="80"/>
    </location>
</feature>
<feature type="sequence variant" id="VAR_030060" description="In HFE4; complete loss of HAMP-binding; dbSNP:rs104893662." evidence="18 25">
    <original>N</original>
    <variation>D</variation>
    <location>
        <position position="144"/>
    </location>
</feature>
<feature type="sequence variant" id="VAR_022595" description="In HFE4; Does not affect protein stability. Does not affect cell surface localization. Increases iron export activity; dbSNP:rs104893662." evidence="5 28">
    <original>N</original>
    <variation>H</variation>
    <location>
        <position position="144"/>
    </location>
</feature>
<feature type="sequence variant" id="VAR_030061" description="In HFE4; Does not affect protein stability. Does not affect cell surface localization. Increases iron export activity; dbSNP:rs1434101655." evidence="13 28">
    <original>N</original>
    <variation>T</variation>
    <location>
        <position position="144"/>
    </location>
</feature>
<feature type="sequence variant" id="VAR_022596" description="In HFE4; Reduces protein stability. Loss of cell surface localization. Loss of iron export activity. Increases intracellular manganese; dbSNP:rs104893663." evidence="11 28">
    <original>D</original>
    <variation>G</variation>
    <location>
        <position position="157"/>
    </location>
</feature>
<feature type="sequence variant" id="VAR_022597" description="In HFE4." evidence="7 8 9 10">
    <location>
        <position position="162"/>
    </location>
</feature>
<feature type="sequence variant" id="VAR_030062" description="In iron overload; dbSNP:rs1397119020." evidence="16">
    <original>N</original>
    <variation>I</variation>
    <location>
        <position position="174"/>
    </location>
</feature>
<feature type="sequence variant" id="VAR_030063" description="In HFE4; dbSNP:rs104893672." evidence="20">
    <original>D</original>
    <variation>V</variation>
    <location>
        <position position="181"/>
    </location>
</feature>
<feature type="sequence variant" id="VAR_022598" description="In HFE4; dbSNP:rs104893670." evidence="11">
    <original>Q</original>
    <variation>H</variation>
    <location>
        <position position="182"/>
    </location>
</feature>
<feature type="sequence variant" id="VAR_020295" description="Associated with mild anemia and a tendency to iron loading. Prevents hepcidin/HAMP-induced degradation. Protects against severe malaria disease; dbSNP:rs11568350." evidence="15 26">
    <original>Q</original>
    <variation>H</variation>
    <location>
        <position position="248"/>
    </location>
</feature>
<feature type="sequence variant" id="VAR_030064" description="In HFE4; dbSNP:rs104893664." evidence="20">
    <original>G</original>
    <variation>D</variation>
    <location>
        <position position="267"/>
    </location>
</feature>
<feature type="sequence variant" id="VAR_030065" description="In HFE4; dbSNP:rs368420430." evidence="17 18">
    <original>D</original>
    <variation>V</variation>
    <location>
        <position position="270"/>
    </location>
</feature>
<feature type="sequence variant" id="VAR_022599" description="In HFE4; dbSNP:rs104893671." evidence="11">
    <original>G</original>
    <variation>V</variation>
    <location>
        <position position="323"/>
    </location>
</feature>
<feature type="sequence variant" id="VAR_030066" description="In iron overload; dbSNP:rs1227198230." evidence="18">
    <original>C</original>
    <variation>Y</variation>
    <location>
        <position position="326"/>
    </location>
</feature>
<feature type="sequence variant" id="VAR_020296" description="In dbSNP:rs11568355.">
    <original>M</original>
    <variation>V</variation>
    <location>
        <position position="432"/>
    </location>
</feature>
<feature type="sequence variant" id="VAR_029299" description="In dbSNP:rs45606432.">
    <original>P</original>
    <variation>L</variation>
    <location>
        <position position="443"/>
    </location>
</feature>
<feature type="sequence variant" id="VAR_030067" description="In HFE4; Loss of iron export activity; dbSNP:rs1060501102." evidence="14 19">
    <original>G</original>
    <variation>D</variation>
    <location>
        <position position="490"/>
    </location>
</feature>
<feature type="sequence variant" id="VAR_018980" description="In dbSNP:rs11568346.">
    <original>R</original>
    <variation>G</variation>
    <location>
        <position position="561"/>
    </location>
</feature>
<feature type="mutagenesis site" description="Reduces protein stability. Loss of cell surface localization. Loss of iron export activity. Increases intracellular manganese." evidence="28">
    <original>R</original>
    <variation>G</variation>
    <location>
        <position position="88"/>
    </location>
</feature>
<feature type="mutagenesis site" description="Loss of iron export activity. Loss of cell surface localization. Increases intracellular manganese." evidence="28">
    <original>D</original>
    <variation>Y</variation>
    <location>
        <position position="157"/>
    </location>
</feature>
<feature type="mutagenesis site" description="Loss of iron export activity." evidence="19">
    <original>L</original>
    <variation>F</variation>
    <location>
        <position position="170"/>
    </location>
</feature>
<feature type="mutagenesis site" description="No loss of ubiquitination; when associated with R-253." evidence="22">
    <original>K</original>
    <variation>R</variation>
    <location>
        <position position="236"/>
    </location>
</feature>
<feature type="mutagenesis site" description="Loss of HAMP-induced endocytosis." evidence="22 25">
    <original>K</original>
    <variation>E</variation>
    <location>
        <position position="240"/>
    </location>
</feature>
<feature type="mutagenesis site" description="No loss of ubiquitination; when associated with R-236." evidence="22">
    <original>K</original>
    <variation>R</variation>
    <location>
        <position position="253"/>
    </location>
</feature>
<feature type="mutagenesis site" description="Complete loss of HAMP-dependent ubiquitination. Does not affect protein stability. Does not affect cell surface localization." evidence="22 28">
    <original>C</original>
    <variation>S</variation>
    <location>
        <position position="326"/>
    </location>
</feature>
<feature type="mutagenesis site" description="Reduces protein stability." evidence="28">
    <original>S</original>
    <variation>R</variation>
    <location>
        <position position="338"/>
    </location>
</feature>
<feature type="mutagenesis site" description="About 90% loss of HAMP binding." evidence="25">
    <original>Y</original>
    <variation>C</variation>
    <location>
        <position position="501"/>
    </location>
</feature>
<feature type="mutagenesis site" description="About 95% loss of HAMP binding." evidence="25">
    <original>D</original>
    <variation>N</variation>
    <location>
        <position position="504"/>
    </location>
</feature>
<feature type="sequence conflict" description="In Ref. 10; AAQ13603." evidence="32" ref="10">
    <original>TSCY</original>
    <variation>VSSQ</variation>
    <location>
        <begin position="130"/>
        <end position="133"/>
    </location>
</feature>
<feature type="sequence conflict" description="In Ref. 9; AAH35893." evidence="32" ref="9">
    <original>F</original>
    <variation>S</variation>
    <location>
        <position position="324"/>
    </location>
</feature>
<feature type="sequence conflict" description="In Ref. 1; AAF80986." evidence="32" ref="1">
    <original>IY</original>
    <variation>RD</variation>
    <location>
        <begin position="430"/>
        <end position="431"/>
    </location>
</feature>
<feature type="helix" evidence="38">
    <location>
        <begin position="17"/>
        <end position="20"/>
    </location>
</feature>
<feature type="helix" evidence="38">
    <location>
        <begin position="24"/>
        <end position="53"/>
    </location>
</feature>
<feature type="turn" evidence="38">
    <location>
        <begin position="54"/>
        <end position="56"/>
    </location>
</feature>
<feature type="helix" evidence="38">
    <location>
        <begin position="59"/>
        <end position="85"/>
    </location>
</feature>
<feature type="helix" evidence="38">
    <location>
        <begin position="88"/>
        <end position="115"/>
    </location>
</feature>
<feature type="helix" evidence="38">
    <location>
        <begin position="117"/>
        <end position="122"/>
    </location>
</feature>
<feature type="helix" evidence="38">
    <location>
        <begin position="126"/>
        <end position="155"/>
    </location>
</feature>
<feature type="helix" evidence="38">
    <location>
        <begin position="158"/>
        <end position="162"/>
    </location>
</feature>
<feature type="turn" evidence="39">
    <location>
        <begin position="163"/>
        <end position="165"/>
    </location>
</feature>
<feature type="helix" evidence="38">
    <location>
        <begin position="167"/>
        <end position="198"/>
    </location>
</feature>
<feature type="helix" evidence="38">
    <location>
        <begin position="201"/>
        <end position="229"/>
    </location>
</feature>
<feature type="helix" evidence="38">
    <location>
        <begin position="231"/>
        <end position="234"/>
    </location>
</feature>
<feature type="helix" evidence="38">
    <location>
        <begin position="290"/>
        <end position="303"/>
    </location>
</feature>
<feature type="helix" evidence="38">
    <location>
        <begin position="308"/>
        <end position="316"/>
    </location>
</feature>
<feature type="strand" evidence="39">
    <location>
        <begin position="321"/>
        <end position="323"/>
    </location>
</feature>
<feature type="turn" evidence="38">
    <location>
        <begin position="324"/>
        <end position="327"/>
    </location>
</feature>
<feature type="helix" evidence="38">
    <location>
        <begin position="328"/>
        <end position="334"/>
    </location>
</feature>
<feature type="helix" evidence="38">
    <location>
        <begin position="339"/>
        <end position="366"/>
    </location>
</feature>
<feature type="helix" evidence="38">
    <location>
        <begin position="369"/>
        <end position="390"/>
    </location>
</feature>
<feature type="strand" evidence="41">
    <location>
        <begin position="393"/>
        <end position="395"/>
    </location>
</feature>
<feature type="strand" evidence="40">
    <location>
        <begin position="400"/>
        <end position="402"/>
    </location>
</feature>
<feature type="helix" evidence="38">
    <location>
        <begin position="453"/>
        <end position="483"/>
    </location>
</feature>
<feature type="helix" evidence="38">
    <location>
        <begin position="486"/>
        <end position="488"/>
    </location>
</feature>
<feature type="helix" evidence="38">
    <location>
        <begin position="489"/>
        <end position="513"/>
    </location>
</feature>
<feature type="helix" evidence="38">
    <location>
        <begin position="517"/>
        <end position="545"/>
    </location>
</feature>
<dbReference type="EMBL" id="AF215636">
    <property type="protein sequence ID" value="AAF80986.1"/>
    <property type="molecule type" value="mRNA"/>
</dbReference>
<dbReference type="EMBL" id="AF231121">
    <property type="protein sequence ID" value="AAF44330.1"/>
    <property type="molecule type" value="mRNA"/>
</dbReference>
<dbReference type="EMBL" id="AF226614">
    <property type="protein sequence ID" value="AAF36697.1"/>
    <property type="molecule type" value="mRNA"/>
</dbReference>
<dbReference type="EMBL" id="AL136944">
    <property type="protein sequence ID" value="CAB66878.1"/>
    <property type="molecule type" value="mRNA"/>
</dbReference>
<dbReference type="EMBL" id="AK314827">
    <property type="protein sequence ID" value="BAG37348.1"/>
    <property type="molecule type" value="mRNA"/>
</dbReference>
<dbReference type="EMBL" id="CR533564">
    <property type="protein sequence ID" value="CAG38595.1"/>
    <property type="molecule type" value="mRNA"/>
</dbReference>
<dbReference type="EMBL" id="AC013439">
    <property type="protein sequence ID" value="AAX93082.1"/>
    <property type="molecule type" value="Genomic_DNA"/>
</dbReference>
<dbReference type="EMBL" id="CH471058">
    <property type="protein sequence ID" value="EAX10902.1"/>
    <property type="molecule type" value="Genomic_DNA"/>
</dbReference>
<dbReference type="EMBL" id="BC035893">
    <property type="protein sequence ID" value="AAH35893.1"/>
    <property type="molecule type" value="mRNA"/>
</dbReference>
<dbReference type="EMBL" id="BC037733">
    <property type="protein sequence ID" value="AAH37733.1"/>
    <property type="molecule type" value="mRNA"/>
</dbReference>
<dbReference type="EMBL" id="AF171087">
    <property type="protein sequence ID" value="AAQ13603.1"/>
    <property type="molecule type" value="mRNA"/>
</dbReference>
<dbReference type="EMBL" id="AJ604512">
    <property type="protein sequence ID" value="CAE53170.1"/>
    <property type="molecule type" value="Genomic_DNA"/>
</dbReference>
<dbReference type="EMBL" id="AJ609539">
    <property type="protein sequence ID" value="CAE81347.1"/>
    <property type="molecule type" value="Genomic_DNA"/>
</dbReference>
<dbReference type="EMBL" id="AJ609540">
    <property type="protein sequence ID" value="CAE81348.1"/>
    <property type="molecule type" value="Genomic_DNA"/>
</dbReference>
<dbReference type="EMBL" id="AJ616848">
    <property type="protein sequence ID" value="CAE83578.1"/>
    <property type="molecule type" value="Genomic_DNA"/>
</dbReference>
<dbReference type="EMBL" id="AJ616847">
    <property type="protein sequence ID" value="CAE83578.1"/>
    <property type="status" value="JOINED"/>
    <property type="molecule type" value="Genomic_DNA"/>
</dbReference>
<dbReference type="CCDS" id="CCDS2299.1"/>
<dbReference type="RefSeq" id="NP_055400.1">
    <property type="nucleotide sequence ID" value="NM_014585.6"/>
</dbReference>
<dbReference type="PDB" id="6W4S">
    <property type="method" value="EM"/>
    <property type="resolution" value="3.20 A"/>
    <property type="chains" value="F=1-571"/>
</dbReference>
<dbReference type="PDB" id="6WBV">
    <property type="method" value="EM"/>
    <property type="resolution" value="2.50 A"/>
    <property type="chains" value="A=1-571"/>
</dbReference>
<dbReference type="PDB" id="8BZY">
    <property type="method" value="EM"/>
    <property type="resolution" value="3.24 A"/>
    <property type="chains" value="A=2-571"/>
</dbReference>
<dbReference type="PDB" id="8C02">
    <property type="method" value="EM"/>
    <property type="resolution" value="4.09 A"/>
    <property type="chains" value="A=2-571"/>
</dbReference>
<dbReference type="PDB" id="8C03">
    <property type="method" value="EM"/>
    <property type="resolution" value="3.89 A"/>
    <property type="chains" value="A=2-571"/>
</dbReference>
<dbReference type="PDB" id="8DL6">
    <property type="method" value="EM"/>
    <property type="resolution" value="3.00 A"/>
    <property type="chains" value="A=1-571"/>
</dbReference>
<dbReference type="PDB" id="8DL7">
    <property type="method" value="EM"/>
    <property type="resolution" value="2.70 A"/>
    <property type="chains" value="A=1-571"/>
</dbReference>
<dbReference type="PDB" id="8DL8">
    <property type="method" value="EM"/>
    <property type="resolution" value="3.00 A"/>
    <property type="chains" value="A=1-571"/>
</dbReference>
<dbReference type="PDBsum" id="6W4S"/>
<dbReference type="PDBsum" id="6WBV"/>
<dbReference type="PDBsum" id="8BZY"/>
<dbReference type="PDBsum" id="8C02"/>
<dbReference type="PDBsum" id="8C03"/>
<dbReference type="PDBsum" id="8DL6"/>
<dbReference type="PDBsum" id="8DL7"/>
<dbReference type="PDBsum" id="8DL8"/>
<dbReference type="EMDB" id="EMD-16345"/>
<dbReference type="EMDB" id="EMD-16353"/>
<dbReference type="EMDB" id="EMD-16354"/>
<dbReference type="EMDB" id="EMD-21539"/>
<dbReference type="EMDB" id="EMD-21599"/>
<dbReference type="EMDB" id="EMD-27497"/>
<dbReference type="EMDB" id="EMD-27498"/>
<dbReference type="EMDB" id="EMD-27499"/>
<dbReference type="SMR" id="Q9NP59"/>
<dbReference type="BioGRID" id="119033">
    <property type="interactions" value="7"/>
</dbReference>
<dbReference type="CORUM" id="Q9NP59"/>
<dbReference type="FunCoup" id="Q9NP59">
    <property type="interactions" value="967"/>
</dbReference>
<dbReference type="IntAct" id="Q9NP59">
    <property type="interactions" value="8"/>
</dbReference>
<dbReference type="MINT" id="Q9NP59"/>
<dbReference type="STRING" id="9606.ENSP00000261024"/>
<dbReference type="BindingDB" id="Q9NP59"/>
<dbReference type="ChEMBL" id="CHEMBL3392948"/>
<dbReference type="DrugBank" id="DB13257">
    <property type="generic name" value="Ferrous sulfate anhydrous"/>
</dbReference>
<dbReference type="DrugBank" id="DB14520">
    <property type="generic name" value="Tetraferric tricitrate decahydrate"/>
</dbReference>
<dbReference type="TCDB" id="2.A.100.1.4">
    <property type="family name" value="the ferroportin (fpn) family"/>
</dbReference>
<dbReference type="GlyCosmos" id="Q9NP59">
    <property type="glycosylation" value="1 site, No reported glycans"/>
</dbReference>
<dbReference type="GlyGen" id="Q9NP59">
    <property type="glycosylation" value="2 sites, 1 O-linked glycan (1 site)"/>
</dbReference>
<dbReference type="iPTMnet" id="Q9NP59"/>
<dbReference type="PhosphoSitePlus" id="Q9NP59"/>
<dbReference type="BioMuta" id="SLC40A1"/>
<dbReference type="DMDM" id="48428687"/>
<dbReference type="jPOST" id="Q9NP59"/>
<dbReference type="MassIVE" id="Q9NP59"/>
<dbReference type="PaxDb" id="9606-ENSP00000261024"/>
<dbReference type="PeptideAtlas" id="Q9NP59"/>
<dbReference type="ProteomicsDB" id="81890"/>
<dbReference type="ABCD" id="Q9NP59">
    <property type="antibodies" value="9 sequenced antibodies"/>
</dbReference>
<dbReference type="Antibodypedia" id="34022">
    <property type="antibodies" value="398 antibodies from 35 providers"/>
</dbReference>
<dbReference type="DNASU" id="30061"/>
<dbReference type="Ensembl" id="ENST00000261024.7">
    <property type="protein sequence ID" value="ENSP00000261024.3"/>
    <property type="gene ID" value="ENSG00000138449.11"/>
</dbReference>
<dbReference type="GeneID" id="30061"/>
<dbReference type="KEGG" id="hsa:30061"/>
<dbReference type="MANE-Select" id="ENST00000261024.7">
    <property type="protein sequence ID" value="ENSP00000261024.3"/>
    <property type="RefSeq nucleotide sequence ID" value="NM_014585.6"/>
    <property type="RefSeq protein sequence ID" value="NP_055400.1"/>
</dbReference>
<dbReference type="UCSC" id="uc002uqp.5">
    <property type="organism name" value="human"/>
</dbReference>
<dbReference type="AGR" id="HGNC:10909"/>
<dbReference type="CTD" id="30061"/>
<dbReference type="DisGeNET" id="30061"/>
<dbReference type="GeneCards" id="SLC40A1"/>
<dbReference type="HGNC" id="HGNC:10909">
    <property type="gene designation" value="SLC40A1"/>
</dbReference>
<dbReference type="HPA" id="ENSG00000138449">
    <property type="expression patterns" value="Low tissue specificity"/>
</dbReference>
<dbReference type="MalaCards" id="SLC40A1"/>
<dbReference type="MIM" id="604653">
    <property type="type" value="gene"/>
</dbReference>
<dbReference type="MIM" id="606069">
    <property type="type" value="phenotype"/>
</dbReference>
<dbReference type="neXtProt" id="NX_Q9NP59"/>
<dbReference type="OpenTargets" id="ENSG00000138449"/>
<dbReference type="Orphanet" id="648562">
    <property type="disease" value="Ferroportin disease"/>
</dbReference>
<dbReference type="Orphanet" id="647834">
    <property type="disease" value="SLC40A1-related hemochromatosis"/>
</dbReference>
<dbReference type="PharmGKB" id="PA35805"/>
<dbReference type="VEuPathDB" id="HostDB:ENSG00000138449"/>
<dbReference type="eggNOG" id="KOG2601">
    <property type="taxonomic scope" value="Eukaryota"/>
</dbReference>
<dbReference type="GeneTree" id="ENSGT00390000015143"/>
<dbReference type="HOGENOM" id="CLU_020370_1_1_1"/>
<dbReference type="InParanoid" id="Q9NP59"/>
<dbReference type="OMA" id="VAMGHVM"/>
<dbReference type="OrthoDB" id="648861at2759"/>
<dbReference type="PAN-GO" id="Q9NP59">
    <property type="GO annotations" value="5 GO annotations based on evolutionary models"/>
</dbReference>
<dbReference type="PhylomeDB" id="Q9NP59"/>
<dbReference type="TreeFam" id="TF313463"/>
<dbReference type="PathwayCommons" id="Q9NP59"/>
<dbReference type="Reactome" id="R-HSA-425410">
    <property type="pathway name" value="Metal ion SLC transporters"/>
</dbReference>
<dbReference type="Reactome" id="R-HSA-5619049">
    <property type="pathway name" value="Defective SLC40A1 causes hemochromatosis 4 (HFE4) (macrophages)"/>
</dbReference>
<dbReference type="Reactome" id="R-HSA-5619060">
    <property type="pathway name" value="Defective CP causes aceruloplasminemia (ACERULOP)"/>
</dbReference>
<dbReference type="Reactome" id="R-HSA-5655799">
    <property type="pathway name" value="Defective SLC40A1 causes hemochromatosis 4 (HFE4) (duodenum)"/>
</dbReference>
<dbReference type="Reactome" id="R-HSA-917937">
    <property type="pathway name" value="Iron uptake and transport"/>
</dbReference>
<dbReference type="SignaLink" id="Q9NP59"/>
<dbReference type="BioGRID-ORCS" id="30061">
    <property type="hits" value="16 hits in 1161 CRISPR screens"/>
</dbReference>
<dbReference type="ChiTaRS" id="SLC40A1">
    <property type="organism name" value="human"/>
</dbReference>
<dbReference type="GeneWiki" id="Ferroportin"/>
<dbReference type="GenomeRNAi" id="30061"/>
<dbReference type="Pharos" id="Q9NP59">
    <property type="development level" value="Tchem"/>
</dbReference>
<dbReference type="PRO" id="PR:Q9NP59"/>
<dbReference type="Proteomes" id="UP000005640">
    <property type="component" value="Chromosome 2"/>
</dbReference>
<dbReference type="RNAct" id="Q9NP59">
    <property type="molecule type" value="protein"/>
</dbReference>
<dbReference type="Bgee" id="ENSG00000138449">
    <property type="expression patterns" value="Expressed in pancreatic ductal cell and 188 other cell types or tissues"/>
</dbReference>
<dbReference type="ExpressionAtlas" id="Q9NP59">
    <property type="expression patterns" value="baseline and differential"/>
</dbReference>
<dbReference type="GO" id="GO:0016323">
    <property type="term" value="C:basolateral plasma membrane"/>
    <property type="evidence" value="ECO:0000314"/>
    <property type="project" value="UniProtKB"/>
</dbReference>
<dbReference type="GO" id="GO:0005737">
    <property type="term" value="C:cytoplasm"/>
    <property type="evidence" value="ECO:0000304"/>
    <property type="project" value="ProtInc"/>
</dbReference>
<dbReference type="GO" id="GO:0005829">
    <property type="term" value="C:cytosol"/>
    <property type="evidence" value="ECO:0000314"/>
    <property type="project" value="HPA"/>
</dbReference>
<dbReference type="GO" id="GO:0016020">
    <property type="term" value="C:membrane"/>
    <property type="evidence" value="ECO:0000304"/>
    <property type="project" value="ProtInc"/>
</dbReference>
<dbReference type="GO" id="GO:0005654">
    <property type="term" value="C:nucleoplasm"/>
    <property type="evidence" value="ECO:0000314"/>
    <property type="project" value="HPA"/>
</dbReference>
<dbReference type="GO" id="GO:0005886">
    <property type="term" value="C:plasma membrane"/>
    <property type="evidence" value="ECO:0000314"/>
    <property type="project" value="UniProtKB"/>
</dbReference>
<dbReference type="GO" id="GO:0008021">
    <property type="term" value="C:synaptic vesicle"/>
    <property type="evidence" value="ECO:0007669"/>
    <property type="project" value="Ensembl"/>
</dbReference>
<dbReference type="GO" id="GO:0015093">
    <property type="term" value="F:ferrous iron transmembrane transporter activity"/>
    <property type="evidence" value="ECO:0000314"/>
    <property type="project" value="UniProt"/>
</dbReference>
<dbReference type="GO" id="GO:0042802">
    <property type="term" value="F:identical protein binding"/>
    <property type="evidence" value="ECO:0007669"/>
    <property type="project" value="Ensembl"/>
</dbReference>
<dbReference type="GO" id="GO:0005381">
    <property type="term" value="F:iron ion transmembrane transporter activity"/>
    <property type="evidence" value="ECO:0000315"/>
    <property type="project" value="BHF-UCL"/>
</dbReference>
<dbReference type="GO" id="GO:0046872">
    <property type="term" value="F:metal ion binding"/>
    <property type="evidence" value="ECO:0007669"/>
    <property type="project" value="UniProtKB-KW"/>
</dbReference>
<dbReference type="GO" id="GO:0017046">
    <property type="term" value="F:peptide hormone binding"/>
    <property type="evidence" value="ECO:0000314"/>
    <property type="project" value="UniProtKB"/>
</dbReference>
<dbReference type="GO" id="GO:0006915">
    <property type="term" value="P:apoptotic process"/>
    <property type="evidence" value="ECO:0007669"/>
    <property type="project" value="Ensembl"/>
</dbReference>
<dbReference type="GO" id="GO:0003158">
    <property type="term" value="P:endothelium development"/>
    <property type="evidence" value="ECO:0007669"/>
    <property type="project" value="Ensembl"/>
</dbReference>
<dbReference type="GO" id="GO:0051649">
    <property type="term" value="P:establishment of localization in cell"/>
    <property type="evidence" value="ECO:0007669"/>
    <property type="project" value="Ensembl"/>
</dbReference>
<dbReference type="GO" id="GO:0006879">
    <property type="term" value="P:intracellular iron ion homeostasis"/>
    <property type="evidence" value="ECO:0000315"/>
    <property type="project" value="BHF-UCL"/>
</dbReference>
<dbReference type="GO" id="GO:1903988">
    <property type="term" value="P:iron ion export across plasma membrane"/>
    <property type="evidence" value="ECO:0000250"/>
    <property type="project" value="BHF-UCL"/>
</dbReference>
<dbReference type="GO" id="GO:0034755">
    <property type="term" value="P:iron ion transmembrane transport"/>
    <property type="evidence" value="ECO:0000315"/>
    <property type="project" value="BHF-UCL"/>
</dbReference>
<dbReference type="GO" id="GO:0002260">
    <property type="term" value="P:lymphocyte homeostasis"/>
    <property type="evidence" value="ECO:0007669"/>
    <property type="project" value="Ensembl"/>
</dbReference>
<dbReference type="GO" id="GO:0060586">
    <property type="term" value="P:multicellular organismal-level iron ion homeostasis"/>
    <property type="evidence" value="ECO:0000250"/>
    <property type="project" value="BHF-UCL"/>
</dbReference>
<dbReference type="GO" id="GO:0043066">
    <property type="term" value="P:negative regulation of apoptotic process"/>
    <property type="evidence" value="ECO:0007669"/>
    <property type="project" value="Ensembl"/>
</dbReference>
<dbReference type="GO" id="GO:0045944">
    <property type="term" value="P:positive regulation of transcription by RNA polymerase II"/>
    <property type="evidence" value="ECO:0007669"/>
    <property type="project" value="Ensembl"/>
</dbReference>
<dbReference type="GO" id="GO:0060345">
    <property type="term" value="P:spleen trabecula formation"/>
    <property type="evidence" value="ECO:0007669"/>
    <property type="project" value="Ensembl"/>
</dbReference>
<dbReference type="GO" id="GO:0006366">
    <property type="term" value="P:transcription by RNA polymerase II"/>
    <property type="evidence" value="ECO:0007669"/>
    <property type="project" value="Ensembl"/>
</dbReference>
<dbReference type="CDD" id="cd17480">
    <property type="entry name" value="MFS_SLC40A1_like"/>
    <property type="match status" value="1"/>
</dbReference>
<dbReference type="Gene3D" id="1.20.1250.20">
    <property type="entry name" value="MFS general substrate transporter like domains"/>
    <property type="match status" value="1"/>
</dbReference>
<dbReference type="InterPro" id="IPR009716">
    <property type="entry name" value="Ferroportin-1"/>
</dbReference>
<dbReference type="InterPro" id="IPR036259">
    <property type="entry name" value="MFS_trans_sf"/>
</dbReference>
<dbReference type="PANTHER" id="PTHR11660">
    <property type="entry name" value="SOLUTE CARRIER FAMILY 40 MEMBER"/>
    <property type="match status" value="1"/>
</dbReference>
<dbReference type="PANTHER" id="PTHR11660:SF47">
    <property type="entry name" value="SOLUTE CARRIER FAMILY 40 MEMBER 1"/>
    <property type="match status" value="1"/>
</dbReference>
<dbReference type="Pfam" id="PF06963">
    <property type="entry name" value="FPN1"/>
    <property type="match status" value="1"/>
</dbReference>
<dbReference type="SUPFAM" id="SSF103473">
    <property type="entry name" value="MFS general substrate transporter"/>
    <property type="match status" value="1"/>
</dbReference>